<protein>
    <recommendedName>
        <fullName evidence="1">Large ribosomal subunit protein eL8</fullName>
    </recommendedName>
    <alternativeName>
        <fullName evidence="2">50S ribosomal protein L7Ae</fullName>
    </alternativeName>
    <alternativeName>
        <fullName evidence="1">Ribosomal protein L8e</fullName>
    </alternativeName>
</protein>
<comment type="function">
    <text evidence="1">Multifunctional RNA-binding protein that recognizes the K-turn motif in ribosomal RNA, the RNA component of RNase P, box H/ACA, box C/D and box C'/D' sRNAs.</text>
</comment>
<comment type="subunit">
    <text evidence="1">Part of the 50S ribosomal subunit. Probably part of the RNase P complex.</text>
</comment>
<comment type="subcellular location">
    <subcellularLocation>
        <location evidence="1">Cytoplasm</location>
    </subcellularLocation>
</comment>
<comment type="similarity">
    <text evidence="1">Belongs to the eukaryotic ribosomal protein eL8 family.</text>
</comment>
<gene>
    <name evidence="1" type="primary">rpl7ae</name>
    <name type="ordered locus">Msp_0633</name>
</gene>
<proteinExistence type="inferred from homology"/>
<accession>Q2NGM2</accession>
<sequence length="123" mass="13292">MANSVYVKFEVPKEIADKVYEALEIARDTGKIGKGTNEVTKNIERNNVALAVIAEDIEPAEIVAHLPILAEEKEIPYVYLPTKEELGEAAGLNVGTASACIIDAGEGQELVDEIVEKVAELKN</sequence>
<organism>
    <name type="scientific">Methanosphaera stadtmanae (strain ATCC 43021 / DSM 3091 / JCM 11832 / MCB-3)</name>
    <dbReference type="NCBI Taxonomy" id="339860"/>
    <lineage>
        <taxon>Archaea</taxon>
        <taxon>Methanobacteriati</taxon>
        <taxon>Methanobacteriota</taxon>
        <taxon>Methanomada group</taxon>
        <taxon>Methanobacteria</taxon>
        <taxon>Methanobacteriales</taxon>
        <taxon>Methanobacteriaceae</taxon>
        <taxon>Methanosphaera</taxon>
    </lineage>
</organism>
<dbReference type="EMBL" id="CP000102">
    <property type="protein sequence ID" value="ABC57031.1"/>
    <property type="molecule type" value="Genomic_DNA"/>
</dbReference>
<dbReference type="RefSeq" id="WP_011406231.1">
    <property type="nucleotide sequence ID" value="NC_007681.1"/>
</dbReference>
<dbReference type="SMR" id="Q2NGM2"/>
<dbReference type="STRING" id="339860.Msp_0633"/>
<dbReference type="GeneID" id="41325209"/>
<dbReference type="KEGG" id="mst:Msp_0633"/>
<dbReference type="eggNOG" id="arCOG01751">
    <property type="taxonomic scope" value="Archaea"/>
</dbReference>
<dbReference type="HOGENOM" id="CLU_084513_4_0_2"/>
<dbReference type="OrthoDB" id="25810at2157"/>
<dbReference type="Proteomes" id="UP000001931">
    <property type="component" value="Chromosome"/>
</dbReference>
<dbReference type="GO" id="GO:0005737">
    <property type="term" value="C:cytoplasm"/>
    <property type="evidence" value="ECO:0007669"/>
    <property type="project" value="UniProtKB-SubCell"/>
</dbReference>
<dbReference type="GO" id="GO:1990904">
    <property type="term" value="C:ribonucleoprotein complex"/>
    <property type="evidence" value="ECO:0007669"/>
    <property type="project" value="UniProtKB-KW"/>
</dbReference>
<dbReference type="GO" id="GO:0005840">
    <property type="term" value="C:ribosome"/>
    <property type="evidence" value="ECO:0007669"/>
    <property type="project" value="UniProtKB-KW"/>
</dbReference>
<dbReference type="GO" id="GO:0004526">
    <property type="term" value="F:ribonuclease P activity"/>
    <property type="evidence" value="ECO:0007669"/>
    <property type="project" value="UniProtKB-UniRule"/>
</dbReference>
<dbReference type="GO" id="GO:0019843">
    <property type="term" value="F:rRNA binding"/>
    <property type="evidence" value="ECO:0007669"/>
    <property type="project" value="UniProtKB-KW"/>
</dbReference>
<dbReference type="GO" id="GO:0003735">
    <property type="term" value="F:structural constituent of ribosome"/>
    <property type="evidence" value="ECO:0007669"/>
    <property type="project" value="InterPro"/>
</dbReference>
<dbReference type="GO" id="GO:0006412">
    <property type="term" value="P:translation"/>
    <property type="evidence" value="ECO:0007669"/>
    <property type="project" value="UniProtKB-UniRule"/>
</dbReference>
<dbReference type="GO" id="GO:0001682">
    <property type="term" value="P:tRNA 5'-leader removal"/>
    <property type="evidence" value="ECO:0007669"/>
    <property type="project" value="UniProtKB-UniRule"/>
</dbReference>
<dbReference type="FunFam" id="3.30.1330.30:FF:000020">
    <property type="entry name" value="50S ribosomal protein L7Ae"/>
    <property type="match status" value="1"/>
</dbReference>
<dbReference type="Gene3D" id="3.30.1330.30">
    <property type="match status" value="1"/>
</dbReference>
<dbReference type="HAMAP" id="MF_00326">
    <property type="entry name" value="Ribosomal_eL8"/>
    <property type="match status" value="1"/>
</dbReference>
<dbReference type="InterPro" id="IPR050257">
    <property type="entry name" value="eL8/uL1-like"/>
</dbReference>
<dbReference type="InterPro" id="IPR029064">
    <property type="entry name" value="Ribosomal_eL30-like_sf"/>
</dbReference>
<dbReference type="InterPro" id="IPR004038">
    <property type="entry name" value="Ribosomal_eL8/eL30/eS12/Gad45"/>
</dbReference>
<dbReference type="InterPro" id="IPR018492">
    <property type="entry name" value="Ribosomal_eL8/Nhp2"/>
</dbReference>
<dbReference type="InterPro" id="IPR022481">
    <property type="entry name" value="Ribosomal_eL8_arc"/>
</dbReference>
<dbReference type="NCBIfam" id="TIGR03677">
    <property type="entry name" value="eL8_ribo"/>
    <property type="match status" value="1"/>
</dbReference>
<dbReference type="PANTHER" id="PTHR23105">
    <property type="entry name" value="RIBOSOMAL PROTEIN L7AE FAMILY MEMBER"/>
    <property type="match status" value="1"/>
</dbReference>
<dbReference type="Pfam" id="PF01248">
    <property type="entry name" value="Ribosomal_L7Ae"/>
    <property type="match status" value="1"/>
</dbReference>
<dbReference type="PRINTS" id="PR00881">
    <property type="entry name" value="L7ARS6FAMILY"/>
</dbReference>
<dbReference type="PRINTS" id="PR00884">
    <property type="entry name" value="RIBOSOMALHS6"/>
</dbReference>
<dbReference type="SUPFAM" id="SSF55315">
    <property type="entry name" value="L30e-like"/>
    <property type="match status" value="1"/>
</dbReference>
<feature type="chain" id="PRO_1000005029" description="Large ribosomal subunit protein eL8">
    <location>
        <begin position="1"/>
        <end position="123"/>
    </location>
</feature>
<name>RL7A_METST</name>
<evidence type="ECO:0000255" key="1">
    <source>
        <dbReference type="HAMAP-Rule" id="MF_00326"/>
    </source>
</evidence>
<evidence type="ECO:0000305" key="2"/>
<reference key="1">
    <citation type="journal article" date="2006" name="J. Bacteriol.">
        <title>The genome sequence of Methanosphaera stadtmanae reveals why this human intestinal archaeon is restricted to methanol and H2 for methane formation and ATP synthesis.</title>
        <authorList>
            <person name="Fricke W.F."/>
            <person name="Seedorf H."/>
            <person name="Henne A."/>
            <person name="Kruer M."/>
            <person name="Liesegang H."/>
            <person name="Hedderich R."/>
            <person name="Gottschalk G."/>
            <person name="Thauer R.K."/>
        </authorList>
    </citation>
    <scope>NUCLEOTIDE SEQUENCE [LARGE SCALE GENOMIC DNA]</scope>
    <source>
        <strain>ATCC 43021 / DSM 3091 / JCM 11832 / MCB-3</strain>
    </source>
</reference>
<keyword id="KW-0963">Cytoplasm</keyword>
<keyword id="KW-1185">Reference proteome</keyword>
<keyword id="KW-0687">Ribonucleoprotein</keyword>
<keyword id="KW-0689">Ribosomal protein</keyword>
<keyword id="KW-0694">RNA-binding</keyword>
<keyword id="KW-0699">rRNA-binding</keyword>
<keyword id="KW-0819">tRNA processing</keyword>